<proteinExistence type="inferred from homology"/>
<keyword id="KW-0028">Amino-acid biosynthesis</keyword>
<keyword id="KW-0963">Cytoplasm</keyword>
<keyword id="KW-0368">Histidine biosynthesis</keyword>
<keyword id="KW-0456">Lyase</keyword>
<comment type="catalytic activity">
    <reaction evidence="1">
        <text>D-erythro-1-(imidazol-4-yl)glycerol 3-phosphate = 3-(imidazol-4-yl)-2-oxopropyl phosphate + H2O</text>
        <dbReference type="Rhea" id="RHEA:11040"/>
        <dbReference type="ChEBI" id="CHEBI:15377"/>
        <dbReference type="ChEBI" id="CHEBI:57766"/>
        <dbReference type="ChEBI" id="CHEBI:58278"/>
        <dbReference type="EC" id="4.2.1.19"/>
    </reaction>
</comment>
<comment type="pathway">
    <text evidence="1">Amino-acid biosynthesis; L-histidine biosynthesis; L-histidine from 5-phospho-alpha-D-ribose 1-diphosphate: step 6/9.</text>
</comment>
<comment type="subcellular location">
    <subcellularLocation>
        <location evidence="1">Cytoplasm</location>
    </subcellularLocation>
</comment>
<comment type="similarity">
    <text evidence="1">Belongs to the imidazoleglycerol-phosphate dehydratase family.</text>
</comment>
<protein>
    <recommendedName>
        <fullName evidence="1">Imidazoleglycerol-phosphate dehydratase</fullName>
        <shortName evidence="1">IGPD</shortName>
        <ecNumber evidence="1">4.2.1.19</ecNumber>
    </recommendedName>
</protein>
<dbReference type="EC" id="4.2.1.19" evidence="1"/>
<dbReference type="EMBL" id="AM408590">
    <property type="protein sequence ID" value="CAL71626.1"/>
    <property type="molecule type" value="Genomic_DNA"/>
</dbReference>
<dbReference type="RefSeq" id="WP_003407950.1">
    <property type="nucleotide sequence ID" value="NC_008769.1"/>
</dbReference>
<dbReference type="SMR" id="A1KJ17"/>
<dbReference type="KEGG" id="mbb:BCG_1639"/>
<dbReference type="HOGENOM" id="CLU_044308_3_0_11"/>
<dbReference type="UniPathway" id="UPA00031">
    <property type="reaction ID" value="UER00011"/>
</dbReference>
<dbReference type="Proteomes" id="UP000001472">
    <property type="component" value="Chromosome"/>
</dbReference>
<dbReference type="GO" id="GO:0005737">
    <property type="term" value="C:cytoplasm"/>
    <property type="evidence" value="ECO:0007669"/>
    <property type="project" value="UniProtKB-SubCell"/>
</dbReference>
<dbReference type="GO" id="GO:0004424">
    <property type="term" value="F:imidazoleglycerol-phosphate dehydratase activity"/>
    <property type="evidence" value="ECO:0007669"/>
    <property type="project" value="UniProtKB-UniRule"/>
</dbReference>
<dbReference type="GO" id="GO:0000105">
    <property type="term" value="P:L-histidine biosynthetic process"/>
    <property type="evidence" value="ECO:0007669"/>
    <property type="project" value="UniProtKB-UniRule"/>
</dbReference>
<dbReference type="CDD" id="cd07914">
    <property type="entry name" value="IGPD"/>
    <property type="match status" value="1"/>
</dbReference>
<dbReference type="FunFam" id="3.30.230.40:FF:000001">
    <property type="entry name" value="Imidazoleglycerol-phosphate dehydratase HisB"/>
    <property type="match status" value="1"/>
</dbReference>
<dbReference type="FunFam" id="3.30.230.40:FF:000003">
    <property type="entry name" value="Imidazoleglycerol-phosphate dehydratase HisB"/>
    <property type="match status" value="1"/>
</dbReference>
<dbReference type="Gene3D" id="3.30.230.40">
    <property type="entry name" value="Imidazole glycerol phosphate dehydratase, domain 1"/>
    <property type="match status" value="2"/>
</dbReference>
<dbReference type="HAMAP" id="MF_00076">
    <property type="entry name" value="HisB"/>
    <property type="match status" value="1"/>
</dbReference>
<dbReference type="InterPro" id="IPR038494">
    <property type="entry name" value="IGPD_sf"/>
</dbReference>
<dbReference type="InterPro" id="IPR000807">
    <property type="entry name" value="ImidazoleglycerolP_deHydtase"/>
</dbReference>
<dbReference type="InterPro" id="IPR020565">
    <property type="entry name" value="ImidazoleglycerP_deHydtase_CS"/>
</dbReference>
<dbReference type="InterPro" id="IPR020568">
    <property type="entry name" value="Ribosomal_Su5_D2-typ_SF"/>
</dbReference>
<dbReference type="NCBIfam" id="NF002110">
    <property type="entry name" value="PRK00951.1-6"/>
    <property type="match status" value="1"/>
</dbReference>
<dbReference type="NCBIfam" id="NF002111">
    <property type="entry name" value="PRK00951.2-1"/>
    <property type="match status" value="1"/>
</dbReference>
<dbReference type="NCBIfam" id="NF002114">
    <property type="entry name" value="PRK00951.2-4"/>
    <property type="match status" value="1"/>
</dbReference>
<dbReference type="PANTHER" id="PTHR23133:SF2">
    <property type="entry name" value="IMIDAZOLEGLYCEROL-PHOSPHATE DEHYDRATASE"/>
    <property type="match status" value="1"/>
</dbReference>
<dbReference type="PANTHER" id="PTHR23133">
    <property type="entry name" value="IMIDAZOLEGLYCEROL-PHOSPHATE DEHYDRATASE HIS7"/>
    <property type="match status" value="1"/>
</dbReference>
<dbReference type="Pfam" id="PF00475">
    <property type="entry name" value="IGPD"/>
    <property type="match status" value="1"/>
</dbReference>
<dbReference type="SUPFAM" id="SSF54211">
    <property type="entry name" value="Ribosomal protein S5 domain 2-like"/>
    <property type="match status" value="2"/>
</dbReference>
<dbReference type="PROSITE" id="PS00954">
    <property type="entry name" value="IGP_DEHYDRATASE_1"/>
    <property type="match status" value="1"/>
</dbReference>
<dbReference type="PROSITE" id="PS00955">
    <property type="entry name" value="IGP_DEHYDRATASE_2"/>
    <property type="match status" value="1"/>
</dbReference>
<accession>A1KJ17</accession>
<feature type="chain" id="PRO_1000010301" description="Imidazoleglycerol-phosphate dehydratase">
    <location>
        <begin position="1"/>
        <end position="210"/>
    </location>
</feature>
<gene>
    <name evidence="1" type="primary">hisB</name>
    <name type="ordered locus">BCG_1639</name>
</gene>
<reference key="1">
    <citation type="journal article" date="2007" name="Proc. Natl. Acad. Sci. U.S.A.">
        <title>Genome plasticity of BCG and impact on vaccine efficacy.</title>
        <authorList>
            <person name="Brosch R."/>
            <person name="Gordon S.V."/>
            <person name="Garnier T."/>
            <person name="Eiglmeier K."/>
            <person name="Frigui W."/>
            <person name="Valenti P."/>
            <person name="Dos Santos S."/>
            <person name="Duthoy S."/>
            <person name="Lacroix C."/>
            <person name="Garcia-Pelayo C."/>
            <person name="Inwald J.K."/>
            <person name="Golby P."/>
            <person name="Garcia J.N."/>
            <person name="Hewinson R.G."/>
            <person name="Behr M.A."/>
            <person name="Quail M.A."/>
            <person name="Churcher C."/>
            <person name="Barrell B.G."/>
            <person name="Parkhill J."/>
            <person name="Cole S.T."/>
        </authorList>
    </citation>
    <scope>NUCLEOTIDE SEQUENCE [LARGE SCALE GENOMIC DNA]</scope>
    <source>
        <strain>BCG / Pasteur 1173P2</strain>
    </source>
</reference>
<name>HIS7_MYCBP</name>
<organism>
    <name type="scientific">Mycobacterium bovis (strain BCG / Pasteur 1173P2)</name>
    <dbReference type="NCBI Taxonomy" id="410289"/>
    <lineage>
        <taxon>Bacteria</taxon>
        <taxon>Bacillati</taxon>
        <taxon>Actinomycetota</taxon>
        <taxon>Actinomycetes</taxon>
        <taxon>Mycobacteriales</taxon>
        <taxon>Mycobacteriaceae</taxon>
        <taxon>Mycobacterium</taxon>
        <taxon>Mycobacterium tuberculosis complex</taxon>
    </lineage>
</organism>
<evidence type="ECO:0000255" key="1">
    <source>
        <dbReference type="HAMAP-Rule" id="MF_00076"/>
    </source>
</evidence>
<sequence>MTTTQTAKASRRARIERRTRESDIVIELDLDGTGQVAVDTGVPFYDHMLTALGSHASFDLTVRATGDVEIEAHHTIEDTAIALGTALGQALGDKRGIRRFGDAFIPMDETLAHAAVDLSGRPYCVHTGEPDHLQHTTIAGSSVPYHTVINRHVFESLAANARIALHVRVLYGRDPHHITEAQYKAVARALRQAVEPDPRVSGVPSTKGAL</sequence>